<reference key="1">
    <citation type="journal article" date="1995" name="AIDS Res. Hum. Retroviruses">
        <title>Nucleotide sequence of the HIV-2 EHO genome, a divergent HIV-2 isolate.</title>
        <authorList>
            <person name="Galabru J."/>
            <person name="Rey-Cuille M.A."/>
            <person name="Hovanessian A.G."/>
        </authorList>
    </citation>
    <scope>NUCLEOTIDE SEQUENCE [GENOMIC DNA]</scope>
</reference>
<organism>
    <name type="scientific">Human immunodeficiency virus type 2 subtype B (isolate EHO)</name>
    <name type="common">HIV-2</name>
    <dbReference type="NCBI Taxonomy" id="388821"/>
    <lineage>
        <taxon>Viruses</taxon>
        <taxon>Riboviria</taxon>
        <taxon>Pararnavirae</taxon>
        <taxon>Artverviricota</taxon>
        <taxon>Revtraviricetes</taxon>
        <taxon>Ortervirales</taxon>
        <taxon>Retroviridae</taxon>
        <taxon>Orthoretrovirinae</taxon>
        <taxon>Lentivirus</taxon>
        <taxon>Human immunodeficiency virus 2</taxon>
    </lineage>
</organism>
<organismHost>
    <name type="scientific">Homo sapiens</name>
    <name type="common">Human</name>
    <dbReference type="NCBI Taxonomy" id="9606"/>
</organismHost>
<gene>
    <name type="primary">gag-pol</name>
</gene>
<sequence length="1464" mass="164877">MGARGSVLSGKKTDELEKVRLRPGGKKRYMLKHIVWAVNELERFGLAESRLGSKEGCRKIRKVLGPLVPTGSENLKSLYNTVCVIFCLHAEEKVKDTEEAKKIAQRHLAADTEKMPAMSKPSKPTSRLAYPVQQIAGNYSHLPLSPRTLNAWVKLVEEKKFGAEVVPGFQALSEGCTPYDINQMLNCVGEHQAAMQIIREIINEEAADWDQQHPSPGPMPAGQLREPRGSDIAGTTSTVEEQIQWMYRPQNPVPVGNIYRRWIQLGLQKCVRMYNPTNILDIKQGPKEPFQSYVDRFYKSLRAEQTDPAVKNWMTQTLLIQNANPDCKLVLKGLGMNPTLEEMLTACQGIGGPGQKARLMAEALKEALTPSTNPFAAAQPRAGKRTVTCWNCGKAGHTARQCKAPRRQGCWKCGQQGHIMSKCPERQAGFLRVRPLGKEASQFPRPGTPGDSAICAPDEPSIRHDTSGCDSICTPCRSSRGDAKELHATREEAEGEQRETLQGGDRGFAAPQFSLWRRPVVKATIEGQSVEVLLDTGADDSIVAGIELGSNYTPKIVGGIGGFINTNEYKNVEIEVVGKRVRATVMTGDTPINIFGRNILNSLGMTLNFPVARIEPVKVQLKPEKDGPKIRQWPLSKEKILALKEICEKMEKEGQLEEAPPTNPYNSPTFAIKKKDKNKWRMLIDFRELNKVTQEFTEVQLGIPHPAGLASKKRITVLDVGDAYFSVPLDPDFRQYTAFTLPAVNNAEPGKRYLYKVLPQGWKGSPAIFQYTMAKVLDPFRKANNDVTIIQYMDDILVASDRSDLEHDRVVSQLKELLNNMGFSTPEEKFQKDPPFKWMGYELWPKKWKLQKIQLPEKEVWTVNDIQKLVGVLNWAAQLFPGIKTRHICKLIRGKMTLTEEVQWTELAEAEFQENKIILEQEQEGSYYKEGVPLEATVQKNLANQWTYKIHQGDKILKVGKYAKVKNTHTNGVRLLAHVVQKIGKEALVIWGEIPMFHLPVERETWDQWWTDYWQVTWIPEWDFVSTPPLIRLAYNLVKDPLEGVETYYTDGSCNKASKEGKAGYVTDRGKDKVKPLEQTTNQQAELEAFALALQDSGPQVNIIVDSQYVMGIVAAQPTETESPIVREIIEEMIKKEKIYVGWVPAHKGLGGNQEVDHLVSQGIRQILFLEKIEPAQEEHEKYHNNVKELVHKFGIPQLVARQIVNSCDKCQQKGEAIHGQVNSELGTWQMDCTHLEGKVIIVAVHVASGFIEAEVIPQETGRQTALFLLKLASRWPITHLHTDNGANFTSQDVKMAAWWIGIEQTFGVPYNPESQGVVEAMNHHLKNQIDRIRDQAVSIETVVLMATHCMNFKRRGGIGDMTPAERIVNMITTEQEIQFLQTKNLKFQNFRVYYREGRDQLWKGPGDLLWKGEGAVIIKVGTEIKVIPRRKAKIIRNYGGGKELDCSADVEDTMQAREVAQSN</sequence>
<keyword id="KW-0014">AIDS</keyword>
<keyword id="KW-0064">Aspartyl protease</keyword>
<keyword id="KW-0167">Capsid protein</keyword>
<keyword id="KW-0229">DNA integration</keyword>
<keyword id="KW-0233">DNA recombination</keyword>
<keyword id="KW-0238">DNA-binding</keyword>
<keyword id="KW-0239">DNA-directed DNA polymerase</keyword>
<keyword id="KW-0255">Endonuclease</keyword>
<keyword id="KW-1262">Eukaryotic host gene expression shutoff by virus</keyword>
<keyword id="KW-1193">Eukaryotic host translation shutoff by virus</keyword>
<keyword id="KW-1032">Host cell membrane</keyword>
<keyword id="KW-1035">Host cytoplasm</keyword>
<keyword id="KW-1039">Host endosome</keyword>
<keyword id="KW-1190">Host gene expression shutoff by virus</keyword>
<keyword id="KW-1043">Host membrane</keyword>
<keyword id="KW-1048">Host nucleus</keyword>
<keyword id="KW-0945">Host-virus interaction</keyword>
<keyword id="KW-0378">Hydrolase</keyword>
<keyword id="KW-0446">Lipid-binding</keyword>
<keyword id="KW-0449">Lipoprotein</keyword>
<keyword id="KW-0460">Magnesium</keyword>
<keyword id="KW-0472">Membrane</keyword>
<keyword id="KW-0479">Metal-binding</keyword>
<keyword id="KW-0511">Multifunctional enzyme</keyword>
<keyword id="KW-0519">Myristate</keyword>
<keyword id="KW-0540">Nuclease</keyword>
<keyword id="KW-0548">Nucleotidyltransferase</keyword>
<keyword id="KW-0597">Phosphoprotein</keyword>
<keyword id="KW-0645">Protease</keyword>
<keyword id="KW-0677">Repeat</keyword>
<keyword id="KW-0688">Ribosomal frameshifting</keyword>
<keyword id="KW-0694">RNA-binding</keyword>
<keyword id="KW-0695">RNA-directed DNA polymerase</keyword>
<keyword id="KW-0808">Transferase</keyword>
<keyword id="KW-1179">Viral genome integration</keyword>
<keyword id="KW-0543">Viral nucleoprotein</keyword>
<keyword id="KW-1163">Viral penetration into host nucleus</keyword>
<keyword id="KW-1188">Viral release from host cell</keyword>
<keyword id="KW-0946">Virion</keyword>
<keyword id="KW-0917">Virion maturation</keyword>
<keyword id="KW-1160">Virus entry into host cell</keyword>
<keyword id="KW-0862">Zinc</keyword>
<keyword id="KW-0863">Zinc-finger</keyword>
<dbReference type="EC" id="3.4.23.47"/>
<dbReference type="EC" id="2.7.7.49"/>
<dbReference type="EC" id="2.7.7.7"/>
<dbReference type="EC" id="3.1.26.13"/>
<dbReference type="EC" id="3.1.13.2"/>
<dbReference type="EC" id="2.7.7.-" evidence="5"/>
<dbReference type="EC" id="3.1.-.-" evidence="5"/>
<dbReference type="EMBL" id="U27200">
    <property type="protein sequence ID" value="AAC54467.1"/>
    <property type="molecule type" value="Genomic_DNA"/>
</dbReference>
<dbReference type="SMR" id="Q89928"/>
<dbReference type="MEROPS" id="A02.002"/>
<dbReference type="PRO" id="PR:Q89928"/>
<dbReference type="Proteomes" id="UP000007423">
    <property type="component" value="Segment"/>
</dbReference>
<dbReference type="GO" id="GO:0043657">
    <property type="term" value="C:host cell"/>
    <property type="evidence" value="ECO:0007669"/>
    <property type="project" value="GOC"/>
</dbReference>
<dbReference type="GO" id="GO:0042025">
    <property type="term" value="C:host cell nucleus"/>
    <property type="evidence" value="ECO:0007669"/>
    <property type="project" value="UniProtKB-SubCell"/>
</dbReference>
<dbReference type="GO" id="GO:0020002">
    <property type="term" value="C:host cell plasma membrane"/>
    <property type="evidence" value="ECO:0007669"/>
    <property type="project" value="UniProtKB-SubCell"/>
</dbReference>
<dbReference type="GO" id="GO:0072494">
    <property type="term" value="C:host multivesicular body"/>
    <property type="evidence" value="ECO:0007669"/>
    <property type="project" value="UniProtKB-SubCell"/>
</dbReference>
<dbReference type="GO" id="GO:0016020">
    <property type="term" value="C:membrane"/>
    <property type="evidence" value="ECO:0007669"/>
    <property type="project" value="UniProtKB-KW"/>
</dbReference>
<dbReference type="GO" id="GO:0019013">
    <property type="term" value="C:viral nucleocapsid"/>
    <property type="evidence" value="ECO:0007669"/>
    <property type="project" value="UniProtKB-KW"/>
</dbReference>
<dbReference type="GO" id="GO:0055036">
    <property type="term" value="C:virion membrane"/>
    <property type="evidence" value="ECO:0007669"/>
    <property type="project" value="UniProtKB-SubCell"/>
</dbReference>
<dbReference type="GO" id="GO:0004190">
    <property type="term" value="F:aspartic-type endopeptidase activity"/>
    <property type="evidence" value="ECO:0007669"/>
    <property type="project" value="UniProtKB-KW"/>
</dbReference>
<dbReference type="GO" id="GO:0003677">
    <property type="term" value="F:DNA binding"/>
    <property type="evidence" value="ECO:0007669"/>
    <property type="project" value="UniProtKB-KW"/>
</dbReference>
<dbReference type="GO" id="GO:0003887">
    <property type="term" value="F:DNA-directed DNA polymerase activity"/>
    <property type="evidence" value="ECO:0007669"/>
    <property type="project" value="UniProtKB-KW"/>
</dbReference>
<dbReference type="GO" id="GO:0004533">
    <property type="term" value="F:exoribonuclease H activity"/>
    <property type="evidence" value="ECO:0007669"/>
    <property type="project" value="UniProtKB-EC"/>
</dbReference>
<dbReference type="GO" id="GO:0008289">
    <property type="term" value="F:lipid binding"/>
    <property type="evidence" value="ECO:0007669"/>
    <property type="project" value="UniProtKB-KW"/>
</dbReference>
<dbReference type="GO" id="GO:0035613">
    <property type="term" value="F:RNA stem-loop binding"/>
    <property type="evidence" value="ECO:0007669"/>
    <property type="project" value="TreeGrafter"/>
</dbReference>
<dbReference type="GO" id="GO:0003964">
    <property type="term" value="F:RNA-directed DNA polymerase activity"/>
    <property type="evidence" value="ECO:0007669"/>
    <property type="project" value="UniProtKB-KW"/>
</dbReference>
<dbReference type="GO" id="GO:0004523">
    <property type="term" value="F:RNA-DNA hybrid ribonuclease activity"/>
    <property type="evidence" value="ECO:0007669"/>
    <property type="project" value="InterPro"/>
</dbReference>
<dbReference type="GO" id="GO:0005198">
    <property type="term" value="F:structural molecule activity"/>
    <property type="evidence" value="ECO:0007669"/>
    <property type="project" value="InterPro"/>
</dbReference>
<dbReference type="GO" id="GO:0008270">
    <property type="term" value="F:zinc ion binding"/>
    <property type="evidence" value="ECO:0007669"/>
    <property type="project" value="UniProtKB-KW"/>
</dbReference>
<dbReference type="GO" id="GO:0015074">
    <property type="term" value="P:DNA integration"/>
    <property type="evidence" value="ECO:0007669"/>
    <property type="project" value="UniProtKB-KW"/>
</dbReference>
<dbReference type="GO" id="GO:0006310">
    <property type="term" value="P:DNA recombination"/>
    <property type="evidence" value="ECO:0007669"/>
    <property type="project" value="UniProtKB-KW"/>
</dbReference>
<dbReference type="GO" id="GO:0075713">
    <property type="term" value="P:establishment of integrated proviral latency"/>
    <property type="evidence" value="ECO:0007669"/>
    <property type="project" value="UniProtKB-KW"/>
</dbReference>
<dbReference type="GO" id="GO:0006508">
    <property type="term" value="P:proteolysis"/>
    <property type="evidence" value="ECO:0007669"/>
    <property type="project" value="UniProtKB-KW"/>
</dbReference>
<dbReference type="GO" id="GO:0046718">
    <property type="term" value="P:symbiont entry into host cell"/>
    <property type="evidence" value="ECO:0007669"/>
    <property type="project" value="UniProtKB-KW"/>
</dbReference>
<dbReference type="GO" id="GO:0039657">
    <property type="term" value="P:symbiont-mediated suppression of host gene expression"/>
    <property type="evidence" value="ECO:0007669"/>
    <property type="project" value="UniProtKB-KW"/>
</dbReference>
<dbReference type="GO" id="GO:0044826">
    <property type="term" value="P:viral genome integration into host DNA"/>
    <property type="evidence" value="ECO:0007669"/>
    <property type="project" value="UniProtKB-KW"/>
</dbReference>
<dbReference type="GO" id="GO:0075732">
    <property type="term" value="P:viral penetration into host nucleus"/>
    <property type="evidence" value="ECO:0007669"/>
    <property type="project" value="UniProtKB-KW"/>
</dbReference>
<dbReference type="GO" id="GO:0075523">
    <property type="term" value="P:viral translational frameshifting"/>
    <property type="evidence" value="ECO:0007669"/>
    <property type="project" value="UniProtKB-KW"/>
</dbReference>
<dbReference type="CDD" id="cd05482">
    <property type="entry name" value="HIV_retropepsin_like"/>
    <property type="match status" value="1"/>
</dbReference>
<dbReference type="Gene3D" id="1.10.10.200">
    <property type="match status" value="1"/>
</dbReference>
<dbReference type="Gene3D" id="1.10.1200.30">
    <property type="match status" value="1"/>
</dbReference>
<dbReference type="Gene3D" id="3.30.70.270">
    <property type="match status" value="3"/>
</dbReference>
<dbReference type="Gene3D" id="2.40.70.10">
    <property type="entry name" value="Acid Proteases"/>
    <property type="match status" value="1"/>
</dbReference>
<dbReference type="Gene3D" id="3.10.10.10">
    <property type="entry name" value="HIV Type 1 Reverse Transcriptase, subunit A, domain 1"/>
    <property type="match status" value="1"/>
</dbReference>
<dbReference type="Gene3D" id="1.10.375.10">
    <property type="entry name" value="Human Immunodeficiency Virus Type 1 Capsid Protein"/>
    <property type="match status" value="1"/>
</dbReference>
<dbReference type="Gene3D" id="1.10.150.90">
    <property type="entry name" value="Immunodeficiency lentiviruses, gag gene matrix protein p17"/>
    <property type="match status" value="1"/>
</dbReference>
<dbReference type="Gene3D" id="2.30.30.10">
    <property type="entry name" value="Integrase, C-terminal domain superfamily, retroviral"/>
    <property type="match status" value="1"/>
</dbReference>
<dbReference type="Gene3D" id="3.30.420.10">
    <property type="entry name" value="Ribonuclease H-like superfamily/Ribonuclease H"/>
    <property type="match status" value="2"/>
</dbReference>
<dbReference type="Gene3D" id="1.20.5.760">
    <property type="entry name" value="Single helix bin"/>
    <property type="match status" value="1"/>
</dbReference>
<dbReference type="Gene3D" id="4.10.60.10">
    <property type="entry name" value="Zinc finger, CCHC-type"/>
    <property type="match status" value="1"/>
</dbReference>
<dbReference type="InterPro" id="IPR001969">
    <property type="entry name" value="Aspartic_peptidase_AS"/>
</dbReference>
<dbReference type="InterPro" id="IPR043502">
    <property type="entry name" value="DNA/RNA_pol_sf"/>
</dbReference>
<dbReference type="InterPro" id="IPR045345">
    <property type="entry name" value="Gag_p24_C"/>
</dbReference>
<dbReference type="InterPro" id="IPR017856">
    <property type="entry name" value="Integrase-like_N"/>
</dbReference>
<dbReference type="InterPro" id="IPR036862">
    <property type="entry name" value="Integrase_C_dom_sf_retrovir"/>
</dbReference>
<dbReference type="InterPro" id="IPR001037">
    <property type="entry name" value="Integrase_C_retrovir"/>
</dbReference>
<dbReference type="InterPro" id="IPR001584">
    <property type="entry name" value="Integrase_cat-core"/>
</dbReference>
<dbReference type="InterPro" id="IPR003308">
    <property type="entry name" value="Integrase_Zn-bd_dom_N"/>
</dbReference>
<dbReference type="InterPro" id="IPR000071">
    <property type="entry name" value="Lentvrl_matrix_N"/>
</dbReference>
<dbReference type="InterPro" id="IPR012344">
    <property type="entry name" value="Matrix_HIV/RSV_N"/>
</dbReference>
<dbReference type="InterPro" id="IPR001995">
    <property type="entry name" value="Peptidase_A2_cat"/>
</dbReference>
<dbReference type="InterPro" id="IPR021109">
    <property type="entry name" value="Peptidase_aspartic_dom_sf"/>
</dbReference>
<dbReference type="InterPro" id="IPR034170">
    <property type="entry name" value="Retropepsin-like_cat_dom"/>
</dbReference>
<dbReference type="InterPro" id="IPR018061">
    <property type="entry name" value="Retropepsins"/>
</dbReference>
<dbReference type="InterPro" id="IPR008916">
    <property type="entry name" value="Retrov_capsid_C"/>
</dbReference>
<dbReference type="InterPro" id="IPR008919">
    <property type="entry name" value="Retrov_capsid_N"/>
</dbReference>
<dbReference type="InterPro" id="IPR010999">
    <property type="entry name" value="Retrovr_matrix"/>
</dbReference>
<dbReference type="InterPro" id="IPR043128">
    <property type="entry name" value="Rev_trsase/Diguanyl_cyclase"/>
</dbReference>
<dbReference type="InterPro" id="IPR012337">
    <property type="entry name" value="RNaseH-like_sf"/>
</dbReference>
<dbReference type="InterPro" id="IPR002156">
    <property type="entry name" value="RNaseH_domain"/>
</dbReference>
<dbReference type="InterPro" id="IPR036397">
    <property type="entry name" value="RNaseH_sf"/>
</dbReference>
<dbReference type="InterPro" id="IPR000477">
    <property type="entry name" value="RT_dom"/>
</dbReference>
<dbReference type="InterPro" id="IPR010659">
    <property type="entry name" value="RVT_connect"/>
</dbReference>
<dbReference type="InterPro" id="IPR010661">
    <property type="entry name" value="RVT_thumb"/>
</dbReference>
<dbReference type="InterPro" id="IPR001878">
    <property type="entry name" value="Znf_CCHC"/>
</dbReference>
<dbReference type="InterPro" id="IPR036875">
    <property type="entry name" value="Znf_CCHC_sf"/>
</dbReference>
<dbReference type="PANTHER" id="PTHR41694">
    <property type="entry name" value="ENDOGENOUS RETROVIRUS GROUP K MEMBER POL PROTEIN"/>
    <property type="match status" value="1"/>
</dbReference>
<dbReference type="PANTHER" id="PTHR41694:SF3">
    <property type="entry name" value="RNA-DIRECTED DNA POLYMERASE-RELATED"/>
    <property type="match status" value="1"/>
</dbReference>
<dbReference type="Pfam" id="PF00540">
    <property type="entry name" value="Gag_p17"/>
    <property type="match status" value="1"/>
</dbReference>
<dbReference type="Pfam" id="PF00607">
    <property type="entry name" value="Gag_p24"/>
    <property type="match status" value="1"/>
</dbReference>
<dbReference type="Pfam" id="PF19317">
    <property type="entry name" value="Gag_p24_C"/>
    <property type="match status" value="1"/>
</dbReference>
<dbReference type="Pfam" id="PF00552">
    <property type="entry name" value="IN_DBD_C"/>
    <property type="match status" value="1"/>
</dbReference>
<dbReference type="Pfam" id="PF02022">
    <property type="entry name" value="Integrase_Zn"/>
    <property type="match status" value="1"/>
</dbReference>
<dbReference type="Pfam" id="PF00075">
    <property type="entry name" value="RNase_H"/>
    <property type="match status" value="1"/>
</dbReference>
<dbReference type="Pfam" id="PF00665">
    <property type="entry name" value="rve"/>
    <property type="match status" value="1"/>
</dbReference>
<dbReference type="Pfam" id="PF00077">
    <property type="entry name" value="RVP"/>
    <property type="match status" value="1"/>
</dbReference>
<dbReference type="Pfam" id="PF00078">
    <property type="entry name" value="RVT_1"/>
    <property type="match status" value="1"/>
</dbReference>
<dbReference type="Pfam" id="PF06815">
    <property type="entry name" value="RVT_connect"/>
    <property type="match status" value="1"/>
</dbReference>
<dbReference type="Pfam" id="PF06817">
    <property type="entry name" value="RVT_thumb"/>
    <property type="match status" value="1"/>
</dbReference>
<dbReference type="Pfam" id="PF00098">
    <property type="entry name" value="zf-CCHC"/>
    <property type="match status" value="2"/>
</dbReference>
<dbReference type="PRINTS" id="PR00234">
    <property type="entry name" value="HIV1MATRIX"/>
</dbReference>
<dbReference type="SMART" id="SM00343">
    <property type="entry name" value="ZnF_C2HC"/>
    <property type="match status" value="2"/>
</dbReference>
<dbReference type="SUPFAM" id="SSF50630">
    <property type="entry name" value="Acid proteases"/>
    <property type="match status" value="1"/>
</dbReference>
<dbReference type="SUPFAM" id="SSF50122">
    <property type="entry name" value="DNA-binding domain of retroviral integrase"/>
    <property type="match status" value="1"/>
</dbReference>
<dbReference type="SUPFAM" id="SSF56672">
    <property type="entry name" value="DNA/RNA polymerases"/>
    <property type="match status" value="1"/>
</dbReference>
<dbReference type="SUPFAM" id="SSF46919">
    <property type="entry name" value="N-terminal Zn binding domain of HIV integrase"/>
    <property type="match status" value="1"/>
</dbReference>
<dbReference type="SUPFAM" id="SSF47836">
    <property type="entry name" value="Retroviral matrix proteins"/>
    <property type="match status" value="1"/>
</dbReference>
<dbReference type="SUPFAM" id="SSF47353">
    <property type="entry name" value="Retrovirus capsid dimerization domain-like"/>
    <property type="match status" value="1"/>
</dbReference>
<dbReference type="SUPFAM" id="SSF47943">
    <property type="entry name" value="Retrovirus capsid protein, N-terminal core domain"/>
    <property type="match status" value="1"/>
</dbReference>
<dbReference type="SUPFAM" id="SSF57756">
    <property type="entry name" value="Retrovirus zinc finger-like domains"/>
    <property type="match status" value="1"/>
</dbReference>
<dbReference type="SUPFAM" id="SSF53098">
    <property type="entry name" value="Ribonuclease H-like"/>
    <property type="match status" value="2"/>
</dbReference>
<dbReference type="PROSITE" id="PS50175">
    <property type="entry name" value="ASP_PROT_RETROV"/>
    <property type="match status" value="1"/>
</dbReference>
<dbReference type="PROSITE" id="PS00141">
    <property type="entry name" value="ASP_PROTEASE"/>
    <property type="match status" value="1"/>
</dbReference>
<dbReference type="PROSITE" id="PS50994">
    <property type="entry name" value="INTEGRASE"/>
    <property type="match status" value="1"/>
</dbReference>
<dbReference type="PROSITE" id="PS51027">
    <property type="entry name" value="INTEGRASE_DBD"/>
    <property type="match status" value="1"/>
</dbReference>
<dbReference type="PROSITE" id="PS50879">
    <property type="entry name" value="RNASE_H_1"/>
    <property type="match status" value="1"/>
</dbReference>
<dbReference type="PROSITE" id="PS50878">
    <property type="entry name" value="RT_POL"/>
    <property type="match status" value="1"/>
</dbReference>
<dbReference type="PROSITE" id="PS50158">
    <property type="entry name" value="ZF_CCHC"/>
    <property type="match status" value="2"/>
</dbReference>
<dbReference type="PROSITE" id="PS50876">
    <property type="entry name" value="ZF_INTEGRASE"/>
    <property type="match status" value="1"/>
</dbReference>
<evidence type="ECO:0000250" key="1"/>
<evidence type="ECO:0000250" key="2">
    <source>
        <dbReference type="UniProtKB" id="P03348"/>
    </source>
</evidence>
<evidence type="ECO:0000250" key="3">
    <source>
        <dbReference type="UniProtKB" id="P03366"/>
    </source>
</evidence>
<evidence type="ECO:0000250" key="4">
    <source>
        <dbReference type="UniProtKB" id="P03367"/>
    </source>
</evidence>
<evidence type="ECO:0000250" key="5">
    <source>
        <dbReference type="UniProtKB" id="P04585"/>
    </source>
</evidence>
<evidence type="ECO:0000250" key="6">
    <source>
        <dbReference type="UniProtKB" id="P04591"/>
    </source>
</evidence>
<evidence type="ECO:0000250" key="7">
    <source>
        <dbReference type="UniProtKB" id="P12493"/>
    </source>
</evidence>
<evidence type="ECO:0000250" key="8">
    <source>
        <dbReference type="UniProtKB" id="P12497"/>
    </source>
</evidence>
<evidence type="ECO:0000255" key="9"/>
<evidence type="ECO:0000255" key="10">
    <source>
        <dbReference type="PROSITE-ProRule" id="PRU00047"/>
    </source>
</evidence>
<evidence type="ECO:0000255" key="11">
    <source>
        <dbReference type="PROSITE-ProRule" id="PRU00275"/>
    </source>
</evidence>
<evidence type="ECO:0000255" key="12">
    <source>
        <dbReference type="PROSITE-ProRule" id="PRU00405"/>
    </source>
</evidence>
<evidence type="ECO:0000255" key="13">
    <source>
        <dbReference type="PROSITE-ProRule" id="PRU00408"/>
    </source>
</evidence>
<evidence type="ECO:0000255" key="14">
    <source>
        <dbReference type="PROSITE-ProRule" id="PRU00450"/>
    </source>
</evidence>
<evidence type="ECO:0000255" key="15">
    <source>
        <dbReference type="PROSITE-ProRule" id="PRU00457"/>
    </source>
</evidence>
<evidence type="ECO:0000255" key="16">
    <source>
        <dbReference type="PROSITE-ProRule" id="PRU00506"/>
    </source>
</evidence>
<evidence type="ECO:0000255" key="17">
    <source>
        <dbReference type="PROSITE-ProRule" id="PRU10094"/>
    </source>
</evidence>
<evidence type="ECO:0000256" key="18">
    <source>
        <dbReference type="SAM" id="MobiDB-lite"/>
    </source>
</evidence>
<evidence type="ECO:0000305" key="19"/>
<feature type="initiator methionine" description="Removed; by host" evidence="1">
    <location>
        <position position="1"/>
    </location>
</feature>
<feature type="chain" id="PRO_0000261294" description="Gag-Pol polyprotein">
    <location>
        <begin position="2"/>
        <end position="1464"/>
    </location>
</feature>
<feature type="chain" id="PRO_0000246606" description="Matrix protein p17" evidence="1">
    <location>
        <begin position="2"/>
        <end position="130"/>
    </location>
</feature>
<feature type="chain" id="PRO_0000246607" description="Capsid protein p24" evidence="1">
    <location>
        <begin position="131"/>
        <end position="360"/>
    </location>
</feature>
<feature type="peptide" id="PRO_0000246608" description="Spacer peptide 1" evidence="1">
    <location>
        <begin position="361"/>
        <end position="377"/>
    </location>
</feature>
<feature type="chain" id="PRO_0000246609" description="Nucleocapsid protein p7" evidence="1">
    <location>
        <begin position="378"/>
        <end position="429"/>
    </location>
</feature>
<feature type="peptide" id="PRO_0000246743" description="Transframe peptide" evidence="9">
    <location>
        <begin position="430"/>
        <end position="443"/>
    </location>
</feature>
<feature type="chain" id="PRO_0000246610" description="p6-pol" evidence="9">
    <location>
        <begin position="444"/>
        <end position="510"/>
    </location>
</feature>
<feature type="chain" id="PRO_0000246611" description="Protease" evidence="1">
    <location>
        <begin position="511"/>
        <end position="609"/>
    </location>
</feature>
<feature type="chain" id="PRO_0000246612" description="Reverse transcriptase/ribonuclease H" evidence="1">
    <location>
        <begin position="610"/>
        <end position="1168"/>
    </location>
</feature>
<feature type="chain" id="PRO_0000246613" description="p51 RT" evidence="1">
    <location>
        <begin position="610"/>
        <end position="1048"/>
    </location>
</feature>
<feature type="chain" id="PRO_0000246614" description="p15" evidence="1">
    <location>
        <begin position="1049"/>
        <end position="1168"/>
    </location>
</feature>
<feature type="chain" id="PRO_0000246615" description="Integrase" evidence="1">
    <location>
        <begin position="1169"/>
        <end position="1464"/>
    </location>
</feature>
<feature type="domain" description="Peptidase A2" evidence="11">
    <location>
        <begin position="531"/>
        <end position="600"/>
    </location>
</feature>
<feature type="domain" description="Reverse transcriptase" evidence="12">
    <location>
        <begin position="654"/>
        <end position="844"/>
    </location>
</feature>
<feature type="domain" description="RNase H type-1" evidence="13">
    <location>
        <begin position="1042"/>
        <end position="1165"/>
    </location>
</feature>
<feature type="domain" description="Integrase catalytic" evidence="15">
    <location>
        <begin position="1222"/>
        <end position="1373"/>
    </location>
</feature>
<feature type="zinc finger region" description="CCHC-type 1" evidence="10">
    <location>
        <begin position="387"/>
        <end position="404"/>
    </location>
</feature>
<feature type="zinc finger region" description="CCHC-type 2" evidence="10">
    <location>
        <begin position="408"/>
        <end position="425"/>
    </location>
</feature>
<feature type="zinc finger region" description="Integrase-type" evidence="14">
    <location>
        <begin position="1171"/>
        <end position="1212"/>
    </location>
</feature>
<feature type="DNA-binding region" description="Integrase-type" evidence="16">
    <location>
        <begin position="1391"/>
        <end position="1438"/>
    </location>
</feature>
<feature type="region of interest" description="Interaction with Gp41" evidence="8">
    <location>
        <begin position="7"/>
        <end position="31"/>
    </location>
</feature>
<feature type="region of interest" description="Interaction with human PPIA/CYPA and NUP153" evidence="8">
    <location>
        <begin position="186"/>
        <end position="223"/>
    </location>
</feature>
<feature type="region of interest" description="Dimerization/Multimerization of capsid protein p24" evidence="5">
    <location>
        <begin position="274"/>
        <end position="360"/>
    </location>
</feature>
<feature type="region of interest" description="Disordered" evidence="18">
    <location>
        <begin position="483"/>
        <end position="504"/>
    </location>
</feature>
<feature type="region of interest" description="Dimerization of protease" evidence="5">
    <location>
        <begin position="511"/>
        <end position="515"/>
    </location>
</feature>
<feature type="region of interest" description="Dimerization of protease" evidence="5">
    <location>
        <begin position="559"/>
        <end position="565"/>
    </location>
</feature>
<feature type="region of interest" description="Dimerization of protease" evidence="5">
    <location>
        <begin position="598"/>
        <end position="610"/>
    </location>
</feature>
<feature type="region of interest" description="RT 'primer grip'" evidence="1">
    <location>
        <begin position="836"/>
        <end position="844"/>
    </location>
</feature>
<feature type="short sequence motif" description="Nuclear export signal" evidence="1">
    <location>
        <begin position="16"/>
        <end position="22"/>
    </location>
</feature>
<feature type="short sequence motif" description="Nuclear localization signal" evidence="1">
    <location>
        <begin position="26"/>
        <end position="32"/>
    </location>
</feature>
<feature type="short sequence motif" description="Tryptophan repeat motif" evidence="1">
    <location>
        <begin position="1006"/>
        <end position="1022"/>
    </location>
</feature>
<feature type="compositionally biased region" description="Basic and acidic residues" evidence="18">
    <location>
        <begin position="483"/>
        <end position="499"/>
    </location>
</feature>
<feature type="active site" description="For protease activity; shared with dimeric partner" evidence="17">
    <location>
        <position position="535"/>
    </location>
</feature>
<feature type="binding site" evidence="1">
    <location>
        <position position="719"/>
    </location>
    <ligand>
        <name>Mg(2+)</name>
        <dbReference type="ChEBI" id="CHEBI:18420"/>
        <label>1</label>
        <note>catalytic; for reverse transcriptase activity</note>
    </ligand>
</feature>
<feature type="binding site" evidence="1">
    <location>
        <position position="794"/>
    </location>
    <ligand>
        <name>Mg(2+)</name>
        <dbReference type="ChEBI" id="CHEBI:18420"/>
        <label>1</label>
        <note>catalytic; for reverse transcriptase activity</note>
    </ligand>
</feature>
<feature type="binding site" evidence="1">
    <location>
        <position position="795"/>
    </location>
    <ligand>
        <name>Mg(2+)</name>
        <dbReference type="ChEBI" id="CHEBI:18420"/>
        <label>1</label>
        <note>catalytic; for reverse transcriptase activity</note>
    </ligand>
</feature>
<feature type="binding site" evidence="1">
    <location>
        <position position="1051"/>
    </location>
    <ligand>
        <name>Mg(2+)</name>
        <dbReference type="ChEBI" id="CHEBI:18420"/>
        <label>2</label>
        <note>catalytic; for RNase H activity</note>
    </ligand>
</feature>
<feature type="binding site" evidence="1">
    <location>
        <position position="1086"/>
    </location>
    <ligand>
        <name>Mg(2+)</name>
        <dbReference type="ChEBI" id="CHEBI:18420"/>
        <label>2</label>
        <note>catalytic; for RNase H activity</note>
    </ligand>
</feature>
<feature type="binding site" evidence="1">
    <location>
        <position position="1106"/>
    </location>
    <ligand>
        <name>Mg(2+)</name>
        <dbReference type="ChEBI" id="CHEBI:18420"/>
        <label>2</label>
        <note>catalytic; for RNase H activity</note>
    </ligand>
</feature>
<feature type="binding site" evidence="1">
    <location>
        <position position="1157"/>
    </location>
    <ligand>
        <name>Mg(2+)</name>
        <dbReference type="ChEBI" id="CHEBI:18420"/>
        <label>2</label>
        <note>catalytic; for RNase H activity</note>
    </ligand>
</feature>
<feature type="binding site" evidence="14">
    <location>
        <position position="1180"/>
    </location>
    <ligand>
        <name>Zn(2+)</name>
        <dbReference type="ChEBI" id="CHEBI:29105"/>
    </ligand>
</feature>
<feature type="binding site" evidence="14">
    <location>
        <position position="1184"/>
    </location>
    <ligand>
        <name>Zn(2+)</name>
        <dbReference type="ChEBI" id="CHEBI:29105"/>
    </ligand>
</feature>
<feature type="binding site" evidence="14">
    <location>
        <position position="1208"/>
    </location>
    <ligand>
        <name>Zn(2+)</name>
        <dbReference type="ChEBI" id="CHEBI:29105"/>
    </ligand>
</feature>
<feature type="binding site" evidence="14">
    <location>
        <position position="1211"/>
    </location>
    <ligand>
        <name>Zn(2+)</name>
        <dbReference type="ChEBI" id="CHEBI:29105"/>
    </ligand>
</feature>
<feature type="binding site" evidence="1">
    <location>
        <position position="1232"/>
    </location>
    <ligand>
        <name>Mg(2+)</name>
        <dbReference type="ChEBI" id="CHEBI:18420"/>
        <label>3</label>
        <note>catalytic; for integrase activity</note>
    </ligand>
</feature>
<feature type="binding site" evidence="1">
    <location>
        <position position="1284"/>
    </location>
    <ligand>
        <name>Mg(2+)</name>
        <dbReference type="ChEBI" id="CHEBI:18420"/>
        <label>3</label>
        <note>catalytic; for integrase activity</note>
    </ligand>
</feature>
<feature type="binding site" evidence="5">
    <location>
        <position position="1320"/>
    </location>
    <ligand>
        <name>Mg(2+)</name>
        <dbReference type="ChEBI" id="CHEBI:18420"/>
        <label>3</label>
        <note>catalytic; for integrase activity</note>
    </ligand>
</feature>
<feature type="site" description="Cleavage; by viral protease" evidence="9">
    <location>
        <begin position="130"/>
        <end position="131"/>
    </location>
</feature>
<feature type="site" description="Cis/trans isomerization of proline peptide bond; by human PPIA/CYPA" evidence="1">
    <location>
        <begin position="217"/>
        <end position="218"/>
    </location>
</feature>
<feature type="site" description="Cleavage; by viral protease" evidence="1">
    <location>
        <begin position="360"/>
        <end position="361"/>
    </location>
</feature>
<feature type="site" description="Cleavage; by viral protease" evidence="1">
    <location>
        <begin position="377"/>
        <end position="378"/>
    </location>
</feature>
<feature type="site" description="Cleavage; by viral protease" evidence="9">
    <location>
        <begin position="429"/>
        <end position="430"/>
    </location>
</feature>
<feature type="site" description="Cleavage; by viral protease" evidence="9">
    <location>
        <begin position="443" status="uncertain"/>
        <end position="444" status="uncertain"/>
    </location>
</feature>
<feature type="site" description="Cleavage; by viral protease" evidence="9">
    <location>
        <begin position="510" status="uncertain"/>
        <end position="511" status="uncertain"/>
    </location>
</feature>
<feature type="site" description="Cleavage; by viral protease" evidence="9">
    <location>
        <begin position="609"/>
        <end position="610"/>
    </location>
</feature>
<feature type="site" description="Essential for RT p66/p51 heterodimerization" evidence="1">
    <location>
        <position position="1009"/>
    </location>
</feature>
<feature type="site" description="Essential for RT p66/p51 heterodimerization" evidence="1">
    <location>
        <position position="1022"/>
    </location>
</feature>
<feature type="site" description="Cleavage; by viral protease; partial" evidence="9">
    <location>
        <begin position="1047" status="uncertain"/>
        <end position="1048" status="uncertain"/>
    </location>
</feature>
<feature type="site" description="Cleavage; by viral protease" evidence="1">
    <location>
        <begin position="1168"/>
        <end position="1169"/>
    </location>
</feature>
<feature type="modified residue" description="Phosphotyrosine; by host" evidence="1">
    <location>
        <position position="130"/>
    </location>
</feature>
<feature type="lipid moiety-binding region" description="N-myristoyl glycine; by host" evidence="1">
    <location>
        <position position="2"/>
    </location>
</feature>
<name>POL_HV2EH</name>
<comment type="function">
    <molecule>Gag-Pol polyprotein</molecule>
    <text evidence="1">Mediates, with Gag polyprotein, the essential events in virion assembly, including binding the plasma membrane, making the protein-protein interactions necessary to create spherical particles, recruiting the viral Env proteins, and packaging the genomic RNA via direct interactions with the RNA packaging sequence (Psi). Gag-Pol polyprotein may regulate its own translation, by the binding genomic RNA in the 5'-UTR. At low concentration, the polyprotein would promote translation, whereas at high concentration, the polyprotein would encapsidate genomic RNA and then shut off translation.</text>
</comment>
<comment type="function">
    <molecule>Matrix protein p17</molecule>
    <text evidence="8">Targets the polyprotein to the plasma membrane via a multipartite membrane-binding signal, that includes its myristoylated N-terminus. Matrix protein is part of the pre-integration complex. Implicated in the release from host cell mediated by Vpu. Binds to RNA.</text>
</comment>
<comment type="function">
    <molecule>Capsid protein p24</molecule>
    <text evidence="5 8">Forms the conical core that encapsulates the genomic RNA-nucleocapsid complex in the virion. Most core are conical, with only 7% tubular. The core is constituted by capsid protein hexamer subunits. The core is disassembled soon after virion entry (By similarity). Host restriction factors such as TRIM5-alpha or TRIMCyp bind retroviral capsids and cause premature capsid disassembly, leading to blocks in reverse transcription. Capsid restriction by TRIM5 is one of the factors which restricts HIV-1 to the human species. Host PIN1 apparently facilitates the virion uncoating. On the other hand, interactions with PDZD8 or CYPA stabilize the capsid.</text>
</comment>
<comment type="function">
    <molecule>Nucleocapsid protein p7</molecule>
    <text evidence="5">Encapsulates and protects viral dimeric unspliced genomic RNA (gRNA). Binds these RNAs through its zinc fingers. Acts as a nucleic acid chaperone which is involved in rearangement of nucleic acid secondary structure during gRNA retrotranscription. Also facilitates template switch leading to recombination. As part of the polyprotein, participates in gRNA dimerization, packaging, tRNA incorporation and virion assembly.</text>
</comment>
<comment type="function">
    <molecule>Protease</molecule>
    <text evidence="5 11">Aspartyl protease that mediates proteolytic cleavages of Gag and Gag-Pol polyproteins during or shortly after the release of the virion from the plasma membrane. Cleavages take place as an ordered, step-wise cascade to yield mature proteins. This process is called maturation. Displays maximal activity during the budding process just prior to particle release from the cell. Also cleaves Nef and Vif, probably concomitantly with viral structural proteins on maturation of virus particles. Hydrolyzes host EIF4GI and PABP1 in order to shut off the capped cellular mRNA translation. The resulting inhibition of cellular protein synthesis serves to ensure maximal viral gene expression and to evade host immune response (By similarity).</text>
</comment>
<comment type="function">
    <molecule>Reverse transcriptase/ribonuclease H</molecule>
    <text evidence="5">Multifunctional enzyme that converts the viral RNA genome into dsDNA in the cytoplasm, shortly after virus entry into the cell. This enzyme displays a DNA polymerase activity that can copy either DNA or RNA templates, and a ribonuclease H (RNase H) activity that cleaves the RNA strand of RNA-DNA heteroduplexes in a partially processive 3' to 5' endonucleasic mode. Conversion of viral genomic RNA into dsDNA requires many steps. A tRNA(3)-Lys binds to the primer-binding site (PBS) situated at the 5'-end of the viral RNA. RT uses the 3' end of the tRNA primer to perform a short round of RNA-dependent minus-strand DNA synthesis. The reading proceeds through the U5 region and ends after the repeated (R) region which is present at both ends of viral RNA. The portion of the RNA-DNA heteroduplex is digested by the RNase H, resulting in a ssDNA product attached to the tRNA primer. This ssDNA/tRNA hybridizes with the identical R region situated at the 3' end of viral RNA. This template exchange, known as minus-strand DNA strong stop transfer, can be either intra- or intermolecular. RT uses the 3' end of this newly synthesized short ssDNA to perform the RNA-dependent minus-strand DNA synthesis of the whole template. RNase H digests the RNA template except for two polypurine tracts (PPTs) situated at the 5'-end and near the center of the genome. It is not clear if both polymerase and RNase H activities are simultaneous. RNase H probably can proceed both in a polymerase-dependent (RNA cut into small fragments by the same RT performing DNA synthesis) and a polymerase-independent mode (cleavage of remaining RNA fragments by free RTs). Secondly, RT performs DNA-directed plus-strand DNA synthesis using the PPTs that have not been removed by RNase H as primers. PPTs and tRNA primers are then removed by RNase H. The 3' and 5' ssDNA PBS regions hybridize to form a circular dsDNA intermediate. Strand displacement synthesis by RT to the PBS and PPT ends produces a blunt ended, linear dsDNA copy of the viral genome that includes long terminal repeats (LTRs) at both ends.</text>
</comment>
<comment type="function">
    <molecule>Integrase</molecule>
    <text evidence="5">Catalyzes viral DNA integration into the host chromosome, by performing a series of DNA cutting and joining reactions. This enzyme activity takes place after virion entry into a cell and reverse transcription of the RNA genome in dsDNA. The first step in the integration process is 3' processing. This step requires a complex comprising the viral genome, matrix protein, Vpr and integrase. This complex is called the pre-integration complex (PIC). The integrase protein removes 2 nucleotides from each 3' end of the viral DNA, leaving recessed CA OH's at the 3' ends. In the second step, the PIC enters cell nucleus. This process is mediated through integrase and Vpr proteins, and allows the virus to infect a non dividing cell. This ability to enter the nucleus is specific of lentiviruses, other retroviruses cannot and rely on cell division to access cell chromosomes. In the third step, termed strand transfer, the integrase protein joins the previously processed 3' ends to the 5' ends of strands of target cellular DNA at the site of integration. The 5'-ends are produced by integrase-catalyzed staggered cuts, 5 bp apart. A Y-shaped, gapped, recombination intermediate results, with the 5'-ends of the viral DNA strands and the 3' ends of target DNA strands remaining unjoined, flanking a gap of 5 bp. The last step is viral DNA integration into host chromosome. This involves host DNA repair synthesis in which the 5 bp gaps between the unjoined strands are filled in and then ligated. Since this process occurs at both cuts flanking the HIV genome, a 5 bp duplication of host DNA is produced at the ends of HIV-1 integration. Alternatively, Integrase may catalyze the excision of viral DNA just after strand transfer, this is termed disintegration.</text>
</comment>
<comment type="catalytic activity">
    <reaction evidence="11">
        <text>Endopeptidase for which the P1 residue is preferably hydrophobic.</text>
        <dbReference type="EC" id="3.4.23.47"/>
    </reaction>
</comment>
<comment type="catalytic activity">
    <reaction evidence="1">
        <text>Endohydrolysis of RNA in RNA/DNA hybrids. Three different cleavage modes: 1. sequence-specific internal cleavage of RNA. Human immunodeficiency virus type 1 and Moloney murine leukemia virus enzymes prefer to cleave the RNA strand one nucleotide away from the RNA-DNA junction. 2. RNA 5'-end directed cleavage 13-19 nucleotides from the RNA end. 3. DNA 3'-end directed cleavage 15-20 nucleotides away from the primer terminus.</text>
        <dbReference type="EC" id="3.1.26.13"/>
    </reaction>
</comment>
<comment type="catalytic activity">
    <reaction evidence="1">
        <text>3'-end directed exonucleolytic cleavage of viral RNA-DNA hybrid.</text>
        <dbReference type="EC" id="3.1.13.2"/>
    </reaction>
</comment>
<comment type="catalytic activity">
    <reaction evidence="12">
        <text>DNA(n) + a 2'-deoxyribonucleoside 5'-triphosphate = DNA(n+1) + diphosphate</text>
        <dbReference type="Rhea" id="RHEA:22508"/>
        <dbReference type="Rhea" id="RHEA-COMP:17339"/>
        <dbReference type="Rhea" id="RHEA-COMP:17340"/>
        <dbReference type="ChEBI" id="CHEBI:33019"/>
        <dbReference type="ChEBI" id="CHEBI:61560"/>
        <dbReference type="ChEBI" id="CHEBI:173112"/>
        <dbReference type="EC" id="2.7.7.49"/>
    </reaction>
</comment>
<comment type="catalytic activity">
    <reaction evidence="12">
        <text>DNA(n) + a 2'-deoxyribonucleoside 5'-triphosphate = DNA(n+1) + diphosphate</text>
        <dbReference type="Rhea" id="RHEA:22508"/>
        <dbReference type="Rhea" id="RHEA-COMP:17339"/>
        <dbReference type="Rhea" id="RHEA-COMP:17340"/>
        <dbReference type="ChEBI" id="CHEBI:33019"/>
        <dbReference type="ChEBI" id="CHEBI:61560"/>
        <dbReference type="ChEBI" id="CHEBI:173112"/>
        <dbReference type="EC" id="2.7.7.7"/>
    </reaction>
</comment>
<comment type="cofactor">
    <cofactor evidence="1">
        <name>Mg(2+)</name>
        <dbReference type="ChEBI" id="CHEBI:18420"/>
    </cofactor>
    <text evidence="1">Binds 2 magnesium ions for reverse transcriptase polymerase activity.</text>
</comment>
<comment type="cofactor">
    <cofactor evidence="1">
        <name>Mg(2+)</name>
        <dbReference type="ChEBI" id="CHEBI:18420"/>
    </cofactor>
    <text evidence="1">Binds 2 magnesium ions for ribonuclease H (RNase H) activity. Substrate-binding is a precondition for magnesium binding.</text>
</comment>
<comment type="cofactor">
    <cofactor evidence="1">
        <name>Mg(2+)</name>
        <dbReference type="ChEBI" id="CHEBI:18420"/>
    </cofactor>
    <text evidence="1">Magnesium ions are required for integrase activity. Binds at least 1, maybe 2 magnesium ions.</text>
</comment>
<comment type="activity regulation">
    <text evidence="1">Protease: The viral protease is inhibited by many synthetic protease inhibitors (PIs), such as amprenavir, atazanavir, indinavir, loprinavir, nelfinavir, ritonavir and saquinavir. Use of protease inhibitors in tritherapy regimens permit more ambitious therapeutic strategies. Reverse transcriptase/ribonuclease H: RT can be inhibited either by nucleoside RT inhibitors (NRTIs) or by non nucleoside RT inhibitors (NNRTIs). NRTIs act as chain terminators, whereas NNRTIs inhibit DNA polymerization by binding a small hydrophobic pocket near the RT active site and inducing an allosteric change in this region. Classical NRTIs are abacavir, adefovir (PMEA), didanosine (ddI), lamivudine (3TC), stavudine (d4T), tenofovir (PMPA), zalcitabine (ddC), and zidovudine (AZT). Classical NNRTIs are atevirdine (BHAP U-87201E), delavirdine, efavirenz (DMP-266), emivirine (I-EBU), and nevirapine (BI-RG-587). The tritherapies used as a basic effective treatment of AIDS associate two NRTIs and one NNRTI.</text>
</comment>
<comment type="subunit">
    <molecule>Matrix protein p17</molecule>
    <text evidence="6 7">Homotrimer; further assembles as hexamers of trimers. Interacts with gp41 (via C-terminus). Interacts with host CALM1; this interaction induces a conformational change in the Matrix protein, triggering exposure of the myristate group. Interacts with host AP3D1; this interaction allows the polyprotein trafficking to multivesicular bodies during virus assembly. Part of the pre-integration complex (PIC) which is composed of viral genome, matrix protein, Vpr and integrase.</text>
</comment>
<comment type="subunit">
    <molecule>Capsid protein p24</molecule>
    <text evidence="2 6 7">Homodimer; the homodimer further multimerizes as homohexamers or homopentamers. Interacts with human PPIA/CYPA. Interacts with human NUP153. Interacts with host PDZD8; this interaction stabilizes the capsid. Interacts with monkey TRIM5; this interaction destabilizes the capsid.</text>
</comment>
<comment type="subunit">
    <molecule>Protease</molecule>
    <text evidence="5 8">Homodimer, whose active site consists of two apposed aspartic acid residues.</text>
</comment>
<comment type="subunit">
    <molecule>Reverse transcriptase/ribonuclease H</molecule>
    <text evidence="3">Heterodimer of p66 RT and p51 RT (RT p66/p51) (By similarity). Heterodimerization of RT is essential for DNA polymerase activity (By similarity). The overall folding of the subdomains is similar in p66 RT and p51 RT but the spatial arrangements of the subdomains are dramatically different (By similarity).</text>
</comment>
<comment type="subunit">
    <molecule>Integrase</molecule>
    <text evidence="4 5 8">Homotetramer; may further associate as a homohexadecamer (By similarity). Part of the pre-integration complex (PIC) which is composed of viral genome, matrix protein, Vpr and integrase. Interacts with human SMARCB1/INI1 and human PSIP1/LEDGF isoform 1. Interacts with human KPNA3; this interaction might play a role in nuclear import of the pre-integration complex (By similarity). Interacts with human NUP153; this interaction might play a role in nuclear import of the pre-integration complex (By similarity).</text>
</comment>
<comment type="subcellular location">
    <molecule>Gag-Pol polyprotein</molecule>
    <subcellularLocation>
        <location>Host cell membrane</location>
        <topology>Lipid-anchor</topology>
    </subcellularLocation>
    <subcellularLocation>
        <location>Host endosome</location>
        <location>Host multivesicular body</location>
    </subcellularLocation>
    <text evidence="8">These locations are linked to virus assembly sites. The main location is the cell membrane, but under some circumstances, late endosomal compartments can serve as productive sites for virion assembly.</text>
</comment>
<comment type="subcellular location">
    <molecule>Matrix protein p17</molecule>
    <subcellularLocation>
        <location>Virion membrane</location>
        <topology evidence="19">Lipid-anchor</topology>
    </subcellularLocation>
    <subcellularLocation>
        <location evidence="1">Host nucleus</location>
    </subcellularLocation>
    <subcellularLocation>
        <location evidence="1">Host cytoplasm</location>
    </subcellularLocation>
</comment>
<comment type="subcellular location">
    <molecule>Capsid protein p24</molecule>
    <subcellularLocation>
        <location evidence="19">Virion</location>
    </subcellularLocation>
</comment>
<comment type="subcellular location">
    <molecule>Nucleocapsid protein p7</molecule>
    <subcellularLocation>
        <location evidence="19">Virion</location>
    </subcellularLocation>
</comment>
<comment type="subcellular location">
    <molecule>Reverse transcriptase/ribonuclease H</molecule>
    <subcellularLocation>
        <location evidence="19">Virion</location>
    </subcellularLocation>
</comment>
<comment type="subcellular location">
    <molecule>Integrase</molecule>
    <subcellularLocation>
        <location evidence="19">Virion</location>
    </subcellularLocation>
    <subcellularLocation>
        <location evidence="19">Host nucleus</location>
    </subcellularLocation>
    <subcellularLocation>
        <location evidence="19">Host cytoplasm</location>
    </subcellularLocation>
    <text evidence="19">Nuclear at initial phase, cytoplasmic at assembly.</text>
</comment>
<comment type="alternative products">
    <event type="ribosomal frameshifting"/>
    <isoform>
        <id>Q89928-1</id>
        <name>Gag-Pol polyprotein</name>
        <sequence type="displayed"/>
    </isoform>
    <isoform>
        <id>Q74230-1</id>
        <name>Gag polyprotein</name>
        <sequence type="external"/>
    </isoform>
    <text>Translation results in the formation of the Gag polyprotein most of the time. Ribosomal frameshifting at the gag-pol genes boundary occurs at low frequency and produces the Gag-Pol polyprotein. This strategy of translation probably allows the virus to modulate the quantity of each viral protein. Maintenance of a correct Gag to Gag-Pol ratio is essential for RNA dimerization and viral infectivity.</text>
</comment>
<comment type="domain">
    <molecule>Reverse transcriptase/ribonuclease H</molecule>
    <text evidence="1">RT is structured in five subdomains: finger, palm, thumb, connection and RNase H. Within the palm subdomain, the 'primer grip' region is thought to be involved in the positioning of the primer terminus for accommodating the incoming nucleotide. The RNase H domain stabilizes the association of RT with primer-template.</text>
</comment>
<comment type="domain">
    <molecule>Reverse transcriptase/ribonuclease H</molecule>
    <text evidence="1">The tryptophan repeat motif is involved in RT p66/p51 dimerization (By similarity).</text>
</comment>
<comment type="domain">
    <molecule>Integrase</molecule>
    <text evidence="1">The core domain contains the D-x(n)-D-x(35)-E motif, named for the phylogenetically conserved glutamic acid and aspartic acid residues and the invariant 35 amino acid spacing between the second and third acidic residues. Each acidic residue of the D,D(35)E motif is independently essential for the 3'-processing and strand transfer activities of purified integrase protein.</text>
</comment>
<comment type="PTM">
    <molecule>Gag-Pol polyprotein</molecule>
    <text evidence="5 12">Specific enzymatic cleavages by the viral protease yield mature proteins. The protease is released by autocatalytic cleavage. The polyprotein is cleaved during and after budding, this process is termed maturation. Proteolytic cleavage of p66 RT removes the RNase H domain to yield the p51 RT subunit. Nucleocapsid protein p7 might be further cleaved after virus entry.</text>
</comment>
<comment type="miscellaneous">
    <molecule>Reverse transcriptase/ribonuclease H</molecule>
    <text evidence="1">Error-prone enzyme that lacks a proof-reading function. High mutations rate is a direct consequence of this characteristic. RT also displays frequent template switching leading to high recombination rate. Recombination mostly occurs between homologous regions of the two copackaged RNA genomes. If these two RNA molecules derive from different viral strains, reverse transcription will give rise to highly recombinated proviral DNAs.</text>
</comment>
<comment type="miscellaneous">
    <text>This isolate is from a Gambian case of 'neuro-AIDS'.</text>
</comment>
<comment type="miscellaneous">
    <molecule>Isoform Gag-Pol polyprotein</molecule>
    <text>Produced by -1 ribosomal frameshifting.</text>
</comment>
<accession>Q89928</accession>
<protein>
    <recommendedName>
        <fullName>Gag-Pol polyprotein</fullName>
    </recommendedName>
    <alternativeName>
        <fullName>Pr160Gag-Pol</fullName>
    </alternativeName>
    <component>
        <recommendedName>
            <fullName>Matrix protein p17</fullName>
            <shortName>MA</shortName>
        </recommendedName>
    </component>
    <component>
        <recommendedName>
            <fullName>Capsid protein p24</fullName>
            <shortName>CA</shortName>
        </recommendedName>
    </component>
    <component>
        <recommendedName>
            <fullName evidence="8">Spacer peptide 1</fullName>
            <shortName>SP1</shortName>
        </recommendedName>
        <alternativeName>
            <fullName>p2</fullName>
        </alternativeName>
    </component>
    <component>
        <recommendedName>
            <fullName>Nucleocapsid protein p7</fullName>
            <shortName>NC</shortName>
        </recommendedName>
    </component>
    <component>
        <recommendedName>
            <fullName>Transframe peptide</fullName>
            <shortName>TF</shortName>
        </recommendedName>
    </component>
    <component>
        <recommendedName>
            <fullName>p6-pol</fullName>
            <shortName>p6*</shortName>
        </recommendedName>
    </component>
    <component>
        <recommendedName>
            <fullName>Protease</fullName>
            <ecNumber>3.4.23.47</ecNumber>
        </recommendedName>
        <alternativeName>
            <fullName>PR</fullName>
        </alternativeName>
        <alternativeName>
            <fullName>Retropepsin</fullName>
        </alternativeName>
    </component>
    <component>
        <recommendedName>
            <fullName>Reverse transcriptase/ribonuclease H</fullName>
            <ecNumber>2.7.7.49</ecNumber>
            <ecNumber>2.7.7.7</ecNumber>
            <ecNumber>3.1.26.13</ecNumber>
        </recommendedName>
        <alternativeName>
            <fullName>Exoribonuclease H</fullName>
            <ecNumber>3.1.13.2</ecNumber>
        </alternativeName>
        <alternativeName>
            <fullName>p66 RT</fullName>
        </alternativeName>
    </component>
    <component>
        <recommendedName>
            <fullName>p51 RT</fullName>
        </recommendedName>
    </component>
    <component>
        <recommendedName>
            <fullName>p15</fullName>
        </recommendedName>
    </component>
    <component>
        <recommendedName>
            <fullName>Integrase</fullName>
            <shortName>IN</shortName>
            <ecNumber evidence="5">2.7.7.-</ecNumber>
            <ecNumber evidence="5">3.1.-.-</ecNumber>
        </recommendedName>
    </component>
</protein>
<proteinExistence type="inferred from homology"/>